<evidence type="ECO:0000255" key="1">
    <source>
        <dbReference type="HAMAP-Rule" id="MF_00283"/>
    </source>
</evidence>
<keyword id="KW-0030">Aminoacyl-tRNA synthetase</keyword>
<keyword id="KW-0067">ATP-binding</keyword>
<keyword id="KW-0963">Cytoplasm</keyword>
<keyword id="KW-0436">Ligase</keyword>
<keyword id="KW-0460">Magnesium</keyword>
<keyword id="KW-0479">Metal-binding</keyword>
<keyword id="KW-0547">Nucleotide-binding</keyword>
<keyword id="KW-0648">Protein biosynthesis</keyword>
<keyword id="KW-0694">RNA-binding</keyword>
<keyword id="KW-0820">tRNA-binding</keyword>
<protein>
    <recommendedName>
        <fullName evidence="1">Phenylalanine--tRNA ligase beta subunit</fullName>
        <ecNumber evidence="1">6.1.1.20</ecNumber>
    </recommendedName>
    <alternativeName>
        <fullName evidence="1">Phenylalanyl-tRNA synthetase beta subunit</fullName>
        <shortName evidence="1">PheRS</shortName>
    </alternativeName>
</protein>
<reference key="1">
    <citation type="journal article" date="2005" name="Proc. Natl. Acad. Sci. U.S.A.">
        <title>The psychrophilic lifestyle as revealed by the genome sequence of Colwellia psychrerythraea 34H through genomic and proteomic analyses.</title>
        <authorList>
            <person name="Methe B.A."/>
            <person name="Nelson K.E."/>
            <person name="Deming J.W."/>
            <person name="Momen B."/>
            <person name="Melamud E."/>
            <person name="Zhang X."/>
            <person name="Moult J."/>
            <person name="Madupu R."/>
            <person name="Nelson W.C."/>
            <person name="Dodson R.J."/>
            <person name="Brinkac L.M."/>
            <person name="Daugherty S.C."/>
            <person name="Durkin A.S."/>
            <person name="DeBoy R.T."/>
            <person name="Kolonay J.F."/>
            <person name="Sullivan S.A."/>
            <person name="Zhou L."/>
            <person name="Davidsen T.M."/>
            <person name="Wu M."/>
            <person name="Huston A.L."/>
            <person name="Lewis M."/>
            <person name="Weaver B."/>
            <person name="Weidman J.F."/>
            <person name="Khouri H."/>
            <person name="Utterback T.R."/>
            <person name="Feldblyum T.V."/>
            <person name="Fraser C.M."/>
        </authorList>
    </citation>
    <scope>NUCLEOTIDE SEQUENCE [LARGE SCALE GENOMIC DNA]</scope>
    <source>
        <strain>34H / ATCC BAA-681</strain>
    </source>
</reference>
<feature type="chain" id="PRO_0000232055" description="Phenylalanine--tRNA ligase beta subunit">
    <location>
        <begin position="1"/>
        <end position="807"/>
    </location>
</feature>
<feature type="domain" description="tRNA-binding" evidence="1">
    <location>
        <begin position="39"/>
        <end position="156"/>
    </location>
</feature>
<feature type="domain" description="B5" evidence="1">
    <location>
        <begin position="409"/>
        <end position="488"/>
    </location>
</feature>
<feature type="domain" description="FDX-ACB" evidence="1">
    <location>
        <begin position="713"/>
        <end position="806"/>
    </location>
</feature>
<feature type="binding site" evidence="1">
    <location>
        <position position="466"/>
    </location>
    <ligand>
        <name>Mg(2+)</name>
        <dbReference type="ChEBI" id="CHEBI:18420"/>
        <note>shared with alpha subunit</note>
    </ligand>
</feature>
<feature type="binding site" evidence="1">
    <location>
        <position position="472"/>
    </location>
    <ligand>
        <name>Mg(2+)</name>
        <dbReference type="ChEBI" id="CHEBI:18420"/>
        <note>shared with alpha subunit</note>
    </ligand>
</feature>
<feature type="binding site" evidence="1">
    <location>
        <position position="475"/>
    </location>
    <ligand>
        <name>Mg(2+)</name>
        <dbReference type="ChEBI" id="CHEBI:18420"/>
        <note>shared with alpha subunit</note>
    </ligand>
</feature>
<feature type="binding site" evidence="1">
    <location>
        <position position="476"/>
    </location>
    <ligand>
        <name>Mg(2+)</name>
        <dbReference type="ChEBI" id="CHEBI:18420"/>
        <note>shared with alpha subunit</note>
    </ligand>
</feature>
<accession>Q47ZS5</accession>
<sequence>MKFSESWLREWVNPALSSDDLAHQITMAGLEVDGVDPVAGEFSGVVIGEVVECGPHPDADKLQVTKISLGDYSSTTVEKGELVTIVCGAKNCRLGLKVAVATVGAVLPGDFKIKKAKLRGVPSFGMLCSESEIGLADDSDGIMELASDAPLGQCVREYLDLNDVTIDVDLTANRGDCLGLKGLAREVGVLNSLEVSEPTITAVAPTIDDVITINIEANEACPRYLGRVIKGINPNATTPLWMVEKLRRCGTRSIDPVVDVTNYILLELGHPMHAFDLAKLDGGINVRFANKDEKLTLLDENEVTLKEGTLVIADENKALAMAGIFGGLESGVTNNTTDLFLESAFFAPLAILGKARQYGLHTDSSHRYERGIDPTLQHDAIERATELLLSIVGGQAGPVVEAKSDADIPQTKDVNLRRKMLDSRIGHHIEDAQVSEILTRLGFTVTTTGEGEAKVWQVIVPAYRFDIKIEVDLIEEVARIFGYNNIPNIAPKATLKMCEQKEANLSLSNLKQTLVNRDYQEAITYSFVDPKVQALLHPGQEVMTLPHPISSEMSVMRLSLWTGLLQSMVYNQNRQQGRIRLFETGLRFVPDESAENGVRQQNMIAGVISGLRVDEHWSMEKAATDFYDIKGDVEALLALTCDAQGYEFSKAEVDALHPGQTAQITKNGVFVGCVGTLHPELERKLGLNGRTLIFELLLSEVLVQKIPEATDISRFPANRRDLAIVVKEDVDAKNVLQLIEKVGGNYLIDLNLFDVYKGQGIDDGFKSLAIALVLQDTSKTLEEKDITDVIDRVVATLKTELNASLRD</sequence>
<proteinExistence type="inferred from homology"/>
<comment type="catalytic activity">
    <reaction evidence="1">
        <text>tRNA(Phe) + L-phenylalanine + ATP = L-phenylalanyl-tRNA(Phe) + AMP + diphosphate + H(+)</text>
        <dbReference type="Rhea" id="RHEA:19413"/>
        <dbReference type="Rhea" id="RHEA-COMP:9668"/>
        <dbReference type="Rhea" id="RHEA-COMP:9699"/>
        <dbReference type="ChEBI" id="CHEBI:15378"/>
        <dbReference type="ChEBI" id="CHEBI:30616"/>
        <dbReference type="ChEBI" id="CHEBI:33019"/>
        <dbReference type="ChEBI" id="CHEBI:58095"/>
        <dbReference type="ChEBI" id="CHEBI:78442"/>
        <dbReference type="ChEBI" id="CHEBI:78531"/>
        <dbReference type="ChEBI" id="CHEBI:456215"/>
        <dbReference type="EC" id="6.1.1.20"/>
    </reaction>
</comment>
<comment type="cofactor">
    <cofactor evidence="1">
        <name>Mg(2+)</name>
        <dbReference type="ChEBI" id="CHEBI:18420"/>
    </cofactor>
    <text evidence="1">Binds 2 magnesium ions per tetramer.</text>
</comment>
<comment type="subunit">
    <text evidence="1">Tetramer of two alpha and two beta subunits.</text>
</comment>
<comment type="subcellular location">
    <subcellularLocation>
        <location evidence="1">Cytoplasm</location>
    </subcellularLocation>
</comment>
<comment type="similarity">
    <text evidence="1">Belongs to the phenylalanyl-tRNA synthetase beta subunit family. Type 1 subfamily.</text>
</comment>
<name>SYFB_COLP3</name>
<organism>
    <name type="scientific">Colwellia psychrerythraea (strain 34H / ATCC BAA-681)</name>
    <name type="common">Vibrio psychroerythus</name>
    <dbReference type="NCBI Taxonomy" id="167879"/>
    <lineage>
        <taxon>Bacteria</taxon>
        <taxon>Pseudomonadati</taxon>
        <taxon>Pseudomonadota</taxon>
        <taxon>Gammaproteobacteria</taxon>
        <taxon>Alteromonadales</taxon>
        <taxon>Colwelliaceae</taxon>
        <taxon>Colwellia</taxon>
    </lineage>
</organism>
<dbReference type="EC" id="6.1.1.20" evidence="1"/>
<dbReference type="EMBL" id="CP000083">
    <property type="protein sequence ID" value="AAZ26606.1"/>
    <property type="molecule type" value="Genomic_DNA"/>
</dbReference>
<dbReference type="RefSeq" id="WP_011043783.1">
    <property type="nucleotide sequence ID" value="NC_003910.7"/>
</dbReference>
<dbReference type="SMR" id="Q47ZS5"/>
<dbReference type="STRING" id="167879.CPS_2995"/>
<dbReference type="KEGG" id="cps:CPS_2995"/>
<dbReference type="eggNOG" id="COG0072">
    <property type="taxonomic scope" value="Bacteria"/>
</dbReference>
<dbReference type="eggNOG" id="COG0073">
    <property type="taxonomic scope" value="Bacteria"/>
</dbReference>
<dbReference type="HOGENOM" id="CLU_016891_0_0_6"/>
<dbReference type="Proteomes" id="UP000000547">
    <property type="component" value="Chromosome"/>
</dbReference>
<dbReference type="GO" id="GO:0009328">
    <property type="term" value="C:phenylalanine-tRNA ligase complex"/>
    <property type="evidence" value="ECO:0007669"/>
    <property type="project" value="TreeGrafter"/>
</dbReference>
<dbReference type="GO" id="GO:0005524">
    <property type="term" value="F:ATP binding"/>
    <property type="evidence" value="ECO:0007669"/>
    <property type="project" value="UniProtKB-UniRule"/>
</dbReference>
<dbReference type="GO" id="GO:0000287">
    <property type="term" value="F:magnesium ion binding"/>
    <property type="evidence" value="ECO:0007669"/>
    <property type="project" value="UniProtKB-UniRule"/>
</dbReference>
<dbReference type="GO" id="GO:0004826">
    <property type="term" value="F:phenylalanine-tRNA ligase activity"/>
    <property type="evidence" value="ECO:0007669"/>
    <property type="project" value="UniProtKB-UniRule"/>
</dbReference>
<dbReference type="GO" id="GO:0000049">
    <property type="term" value="F:tRNA binding"/>
    <property type="evidence" value="ECO:0007669"/>
    <property type="project" value="UniProtKB-KW"/>
</dbReference>
<dbReference type="GO" id="GO:0006432">
    <property type="term" value="P:phenylalanyl-tRNA aminoacylation"/>
    <property type="evidence" value="ECO:0007669"/>
    <property type="project" value="UniProtKB-UniRule"/>
</dbReference>
<dbReference type="CDD" id="cd00769">
    <property type="entry name" value="PheRS_beta_core"/>
    <property type="match status" value="1"/>
</dbReference>
<dbReference type="CDD" id="cd02796">
    <property type="entry name" value="tRNA_bind_bactPheRS"/>
    <property type="match status" value="1"/>
</dbReference>
<dbReference type="FunFam" id="2.40.50.140:FF:000045">
    <property type="entry name" value="Phenylalanine--tRNA ligase beta subunit"/>
    <property type="match status" value="1"/>
</dbReference>
<dbReference type="FunFam" id="3.30.56.10:FF:000002">
    <property type="entry name" value="Phenylalanine--tRNA ligase beta subunit"/>
    <property type="match status" value="1"/>
</dbReference>
<dbReference type="FunFam" id="3.30.70.380:FF:000001">
    <property type="entry name" value="Phenylalanine--tRNA ligase beta subunit"/>
    <property type="match status" value="1"/>
</dbReference>
<dbReference type="FunFam" id="3.30.930.10:FF:000022">
    <property type="entry name" value="Phenylalanine--tRNA ligase beta subunit"/>
    <property type="match status" value="1"/>
</dbReference>
<dbReference type="FunFam" id="3.50.40.10:FF:000001">
    <property type="entry name" value="Phenylalanine--tRNA ligase beta subunit"/>
    <property type="match status" value="1"/>
</dbReference>
<dbReference type="Gene3D" id="3.30.56.10">
    <property type="match status" value="2"/>
</dbReference>
<dbReference type="Gene3D" id="3.30.930.10">
    <property type="entry name" value="Bira Bifunctional Protein, Domain 2"/>
    <property type="match status" value="1"/>
</dbReference>
<dbReference type="Gene3D" id="3.30.70.380">
    <property type="entry name" value="Ferrodoxin-fold anticodon-binding domain"/>
    <property type="match status" value="1"/>
</dbReference>
<dbReference type="Gene3D" id="2.40.50.140">
    <property type="entry name" value="Nucleic acid-binding proteins"/>
    <property type="match status" value="1"/>
</dbReference>
<dbReference type="Gene3D" id="3.50.40.10">
    <property type="entry name" value="Phenylalanyl-trna Synthetase, Chain B, domain 3"/>
    <property type="match status" value="1"/>
</dbReference>
<dbReference type="HAMAP" id="MF_00283">
    <property type="entry name" value="Phe_tRNA_synth_beta1"/>
    <property type="match status" value="1"/>
</dbReference>
<dbReference type="InterPro" id="IPR045864">
    <property type="entry name" value="aa-tRNA-synth_II/BPL/LPL"/>
</dbReference>
<dbReference type="InterPro" id="IPR005146">
    <property type="entry name" value="B3/B4_tRNA-bd"/>
</dbReference>
<dbReference type="InterPro" id="IPR009061">
    <property type="entry name" value="DNA-bd_dom_put_sf"/>
</dbReference>
<dbReference type="InterPro" id="IPR005121">
    <property type="entry name" value="Fdx_antiC-bd"/>
</dbReference>
<dbReference type="InterPro" id="IPR036690">
    <property type="entry name" value="Fdx_antiC-bd_sf"/>
</dbReference>
<dbReference type="InterPro" id="IPR012340">
    <property type="entry name" value="NA-bd_OB-fold"/>
</dbReference>
<dbReference type="InterPro" id="IPR045060">
    <property type="entry name" value="Phe-tRNA-ligase_IIc_bsu"/>
</dbReference>
<dbReference type="InterPro" id="IPR004532">
    <property type="entry name" value="Phe-tRNA-ligase_IIc_bsu_bact"/>
</dbReference>
<dbReference type="InterPro" id="IPR020825">
    <property type="entry name" value="Phe-tRNA_synthase-like_B3/B4"/>
</dbReference>
<dbReference type="InterPro" id="IPR041616">
    <property type="entry name" value="PheRS_beta_core"/>
</dbReference>
<dbReference type="InterPro" id="IPR002547">
    <property type="entry name" value="tRNA-bd_dom"/>
</dbReference>
<dbReference type="InterPro" id="IPR033714">
    <property type="entry name" value="tRNA_bind_bactPheRS"/>
</dbReference>
<dbReference type="InterPro" id="IPR005147">
    <property type="entry name" value="tRNA_synthase_B5-dom"/>
</dbReference>
<dbReference type="NCBIfam" id="TIGR00472">
    <property type="entry name" value="pheT_bact"/>
    <property type="match status" value="1"/>
</dbReference>
<dbReference type="NCBIfam" id="NF045760">
    <property type="entry name" value="YtpR"/>
    <property type="match status" value="1"/>
</dbReference>
<dbReference type="PANTHER" id="PTHR10947:SF0">
    <property type="entry name" value="PHENYLALANINE--TRNA LIGASE BETA SUBUNIT"/>
    <property type="match status" value="1"/>
</dbReference>
<dbReference type="PANTHER" id="PTHR10947">
    <property type="entry name" value="PHENYLALANYL-TRNA SYNTHETASE BETA CHAIN AND LEUCINE-RICH REPEAT-CONTAINING PROTEIN 47"/>
    <property type="match status" value="1"/>
</dbReference>
<dbReference type="Pfam" id="PF03483">
    <property type="entry name" value="B3_4"/>
    <property type="match status" value="1"/>
</dbReference>
<dbReference type="Pfam" id="PF03484">
    <property type="entry name" value="B5"/>
    <property type="match status" value="1"/>
</dbReference>
<dbReference type="Pfam" id="PF03147">
    <property type="entry name" value="FDX-ACB"/>
    <property type="match status" value="1"/>
</dbReference>
<dbReference type="Pfam" id="PF01588">
    <property type="entry name" value="tRNA_bind"/>
    <property type="match status" value="1"/>
</dbReference>
<dbReference type="Pfam" id="PF17759">
    <property type="entry name" value="tRNA_synthFbeta"/>
    <property type="match status" value="1"/>
</dbReference>
<dbReference type="SMART" id="SM00873">
    <property type="entry name" value="B3_4"/>
    <property type="match status" value="1"/>
</dbReference>
<dbReference type="SMART" id="SM00874">
    <property type="entry name" value="B5"/>
    <property type="match status" value="1"/>
</dbReference>
<dbReference type="SMART" id="SM00896">
    <property type="entry name" value="FDX-ACB"/>
    <property type="match status" value="1"/>
</dbReference>
<dbReference type="SUPFAM" id="SSF54991">
    <property type="entry name" value="Anticodon-binding domain of PheRS"/>
    <property type="match status" value="1"/>
</dbReference>
<dbReference type="SUPFAM" id="SSF55681">
    <property type="entry name" value="Class II aaRS and biotin synthetases"/>
    <property type="match status" value="1"/>
</dbReference>
<dbReference type="SUPFAM" id="SSF50249">
    <property type="entry name" value="Nucleic acid-binding proteins"/>
    <property type="match status" value="1"/>
</dbReference>
<dbReference type="SUPFAM" id="SSF56037">
    <property type="entry name" value="PheT/TilS domain"/>
    <property type="match status" value="1"/>
</dbReference>
<dbReference type="SUPFAM" id="SSF46955">
    <property type="entry name" value="Putative DNA-binding domain"/>
    <property type="match status" value="1"/>
</dbReference>
<dbReference type="PROSITE" id="PS51483">
    <property type="entry name" value="B5"/>
    <property type="match status" value="1"/>
</dbReference>
<dbReference type="PROSITE" id="PS51447">
    <property type="entry name" value="FDX_ACB"/>
    <property type="match status" value="1"/>
</dbReference>
<dbReference type="PROSITE" id="PS50886">
    <property type="entry name" value="TRBD"/>
    <property type="match status" value="1"/>
</dbReference>
<gene>
    <name evidence="1" type="primary">pheT</name>
    <name type="ordered locus">CPS_2995</name>
</gene>